<dbReference type="EC" id="3.1.-.-" evidence="3"/>
<dbReference type="EMBL" id="L77117">
    <property type="protein sequence ID" value="AAB99480.1"/>
    <property type="molecule type" value="Genomic_DNA"/>
</dbReference>
<dbReference type="PIR" id="A64484">
    <property type="entry name" value="A64484"/>
</dbReference>
<dbReference type="SMR" id="Q58869"/>
<dbReference type="FunCoup" id="Q58869">
    <property type="interactions" value="4"/>
</dbReference>
<dbReference type="STRING" id="243232.MJ_1474"/>
<dbReference type="PaxDb" id="243232-MJ_1474"/>
<dbReference type="EnsemblBacteria" id="AAB99480">
    <property type="protein sequence ID" value="AAB99480"/>
    <property type="gene ID" value="MJ_1474"/>
</dbReference>
<dbReference type="KEGG" id="mja:MJ_1474"/>
<dbReference type="eggNOG" id="arCOG00721">
    <property type="taxonomic scope" value="Archaea"/>
</dbReference>
<dbReference type="HOGENOM" id="CLU_109674_0_0_2"/>
<dbReference type="InParanoid" id="Q58869"/>
<dbReference type="PhylomeDB" id="Q58869"/>
<dbReference type="Proteomes" id="UP000000805">
    <property type="component" value="Chromosome"/>
</dbReference>
<dbReference type="GO" id="GO:0030688">
    <property type="term" value="C:preribosome, small subunit precursor"/>
    <property type="evidence" value="ECO:0000318"/>
    <property type="project" value="GO_Central"/>
</dbReference>
<dbReference type="GO" id="GO:0000287">
    <property type="term" value="F:magnesium ion binding"/>
    <property type="evidence" value="ECO:0007669"/>
    <property type="project" value="UniProtKB-UniRule"/>
</dbReference>
<dbReference type="GO" id="GO:0004521">
    <property type="term" value="F:RNA endonuclease activity"/>
    <property type="evidence" value="ECO:0000318"/>
    <property type="project" value="GO_Central"/>
</dbReference>
<dbReference type="GO" id="GO:0019843">
    <property type="term" value="F:rRNA binding"/>
    <property type="evidence" value="ECO:0007669"/>
    <property type="project" value="UniProtKB-KW"/>
</dbReference>
<dbReference type="GO" id="GO:0030490">
    <property type="term" value="P:maturation of SSU-rRNA"/>
    <property type="evidence" value="ECO:0000318"/>
    <property type="project" value="GO_Central"/>
</dbReference>
<dbReference type="CDD" id="cd09876">
    <property type="entry name" value="PIN_Nob1-like"/>
    <property type="match status" value="1"/>
</dbReference>
<dbReference type="FunFam" id="3.40.50.1010:FF:000020">
    <property type="entry name" value="20S-pre-rRNA D-site endonuclease NOB1"/>
    <property type="match status" value="1"/>
</dbReference>
<dbReference type="Gene3D" id="3.40.50.1010">
    <property type="entry name" value="5'-nuclease"/>
    <property type="match status" value="1"/>
</dbReference>
<dbReference type="HAMAP" id="MF_00265">
    <property type="entry name" value="VapC_Nob1"/>
    <property type="match status" value="1"/>
</dbReference>
<dbReference type="InterPro" id="IPR039907">
    <property type="entry name" value="NOB1"/>
</dbReference>
<dbReference type="InterPro" id="IPR029060">
    <property type="entry name" value="PIN-like_dom_sf"/>
</dbReference>
<dbReference type="InterPro" id="IPR002716">
    <property type="entry name" value="PIN_dom"/>
</dbReference>
<dbReference type="InterPro" id="IPR033411">
    <property type="entry name" value="Ribonuclease_PIN"/>
</dbReference>
<dbReference type="InterPro" id="IPR022907">
    <property type="entry name" value="VapC_family"/>
</dbReference>
<dbReference type="NCBIfam" id="NF009147">
    <property type="entry name" value="PRK12496.1-4"/>
    <property type="match status" value="1"/>
</dbReference>
<dbReference type="PANTHER" id="PTHR12814">
    <property type="entry name" value="RNA-BINDING PROTEIN NOB1"/>
    <property type="match status" value="1"/>
</dbReference>
<dbReference type="PANTHER" id="PTHR12814:SF2">
    <property type="entry name" value="RNA-BINDING PROTEIN NOB1"/>
    <property type="match status" value="1"/>
</dbReference>
<dbReference type="Pfam" id="PF17146">
    <property type="entry name" value="PIN_6"/>
    <property type="match status" value="1"/>
</dbReference>
<dbReference type="SMART" id="SM00670">
    <property type="entry name" value="PINc"/>
    <property type="match status" value="1"/>
</dbReference>
<dbReference type="SUPFAM" id="SSF88723">
    <property type="entry name" value="PIN domain-like"/>
    <property type="match status" value="1"/>
</dbReference>
<reference key="1">
    <citation type="journal article" date="1996" name="Science">
        <title>Complete genome sequence of the methanogenic archaeon, Methanococcus jannaschii.</title>
        <authorList>
            <person name="Bult C.J."/>
            <person name="White O."/>
            <person name="Olsen G.J."/>
            <person name="Zhou L."/>
            <person name="Fleischmann R.D."/>
            <person name="Sutton G.G."/>
            <person name="Blake J.A."/>
            <person name="FitzGerald L.M."/>
            <person name="Clayton R.A."/>
            <person name="Gocayne J.D."/>
            <person name="Kerlavage A.R."/>
            <person name="Dougherty B.A."/>
            <person name="Tomb J.-F."/>
            <person name="Adams M.D."/>
            <person name="Reich C.I."/>
            <person name="Overbeek R."/>
            <person name="Kirkness E.F."/>
            <person name="Weinstock K.G."/>
            <person name="Merrick J.M."/>
            <person name="Glodek A."/>
            <person name="Scott J.L."/>
            <person name="Geoghagen N.S.M."/>
            <person name="Weidman J.F."/>
            <person name="Fuhrmann J.L."/>
            <person name="Nguyen D."/>
            <person name="Utterback T.R."/>
            <person name="Kelley J.M."/>
            <person name="Peterson J.D."/>
            <person name="Sadow P.W."/>
            <person name="Hanna M.C."/>
            <person name="Cotton M.D."/>
            <person name="Roberts K.M."/>
            <person name="Hurst M.A."/>
            <person name="Kaine B.P."/>
            <person name="Borodovsky M."/>
            <person name="Klenk H.-P."/>
            <person name="Fraser C.M."/>
            <person name="Smith H.O."/>
            <person name="Woese C.R."/>
            <person name="Venter J.C."/>
        </authorList>
    </citation>
    <scope>NUCLEOTIDE SEQUENCE [LARGE SCALE GENOMIC DNA]</scope>
    <source>
        <strain>ATCC 43067 / DSM 2661 / JAL-1 / JCM 10045 / NBRC 100440</strain>
    </source>
</reference>
<reference key="2">
    <citation type="journal article" date="2005" name="Nucleic Acids Res.">
        <title>Toxin-antitoxin loci are highly abundant in free-living but lost from host-associated prokaryotes.</title>
        <authorList>
            <person name="Pandey D.P."/>
            <person name="Gerdes K."/>
        </authorList>
    </citation>
    <scope>POSSIBLE FUNCTION</scope>
    <source>
        <strain>ATCC 43067 / DSM 2661 / JAL-1 / JCM 10045 / NBRC 100440</strain>
    </source>
</reference>
<keyword id="KW-0255">Endonuclease</keyword>
<keyword id="KW-0378">Hydrolase</keyword>
<keyword id="KW-0464">Manganese</keyword>
<keyword id="KW-0479">Metal-binding</keyword>
<keyword id="KW-0540">Nuclease</keyword>
<keyword id="KW-1185">Reference proteome</keyword>
<keyword id="KW-0690">Ribosome biogenesis</keyword>
<keyword id="KW-0694">RNA-binding</keyword>
<keyword id="KW-0699">rRNA-binding</keyword>
<keyword id="KW-1277">Toxin-antitoxin system</keyword>
<keyword id="KW-0862">Zinc</keyword>
<protein>
    <recommendedName>
        <fullName>Endoribonuclease Nob1</fullName>
        <shortName>RNase Nob1</shortName>
        <ecNumber evidence="3">3.1.-.-</ecNumber>
    </recommendedName>
    <alternativeName>
        <fullName>Endonuclease VapC5</fullName>
    </alternativeName>
    <alternativeName>
        <fullName evidence="3">Putative toxin VapC5</fullName>
    </alternativeName>
</protein>
<proteinExistence type="inferred from homology"/>
<name>NOB1_METJA</name>
<accession>Q58869</accession>
<organism>
    <name type="scientific">Methanocaldococcus jannaschii (strain ATCC 43067 / DSM 2661 / JAL-1 / JCM 10045 / NBRC 100440)</name>
    <name type="common">Methanococcus jannaschii</name>
    <dbReference type="NCBI Taxonomy" id="243232"/>
    <lineage>
        <taxon>Archaea</taxon>
        <taxon>Methanobacteriati</taxon>
        <taxon>Methanobacteriota</taxon>
        <taxon>Methanomada group</taxon>
        <taxon>Methanococci</taxon>
        <taxon>Methanococcales</taxon>
        <taxon>Methanocaldococcaceae</taxon>
        <taxon>Methanocaldococcus</taxon>
    </lineage>
</organism>
<evidence type="ECO:0000250" key="1"/>
<evidence type="ECO:0000255" key="2"/>
<evidence type="ECO:0000255" key="3">
    <source>
        <dbReference type="HAMAP-Rule" id="MF_00265"/>
    </source>
</evidence>
<evidence type="ECO:0000305" key="4"/>
<feature type="chain" id="PRO_0000156045" description="Endoribonuclease Nob1">
    <location>
        <begin position="1"/>
        <end position="197"/>
    </location>
</feature>
<feature type="domain" description="PINc" evidence="3">
    <location>
        <begin position="35"/>
        <end position="141"/>
    </location>
</feature>
<feature type="region of interest" description="Flexible linker" evidence="1">
    <location>
        <begin position="147"/>
        <end position="152"/>
    </location>
</feature>
<feature type="region of interest" description="Zinc ribbon" evidence="1">
    <location>
        <begin position="153"/>
        <end position="188"/>
    </location>
</feature>
<feature type="binding site" evidence="2">
    <location>
        <position position="37"/>
    </location>
    <ligand>
        <name>Mn(2+)</name>
        <dbReference type="ChEBI" id="CHEBI:29035"/>
    </ligand>
</feature>
<feature type="binding site" evidence="1">
    <location>
        <position position="158"/>
    </location>
    <ligand>
        <name>Zn(2+)</name>
        <dbReference type="ChEBI" id="CHEBI:29105"/>
    </ligand>
</feature>
<feature type="binding site" evidence="1">
    <location>
        <position position="161"/>
    </location>
    <ligand>
        <name>Zn(2+)</name>
        <dbReference type="ChEBI" id="CHEBI:29105"/>
    </ligand>
</feature>
<feature type="binding site" evidence="1">
    <location>
        <position position="174"/>
    </location>
    <ligand>
        <name>Zn(2+)</name>
        <dbReference type="ChEBI" id="CHEBI:29105"/>
    </ligand>
</feature>
<feature type="binding site" evidence="1">
    <location>
        <position position="177"/>
    </location>
    <ligand>
        <name>Zn(2+)</name>
        <dbReference type="ChEBI" id="CHEBI:29105"/>
    </ligand>
</feature>
<sequence length="197" mass="22781">MLSLPPPEFYKLWIINKSPYQLFNIYRSGIMKVKVLDASAIIHGYNPIIEEGEHYTTPEVLEEIESKKIIVEQALDFGKLKIMSPNREYIKKVEEVVKKTGDNLSQQDIGVLALALNLNAILYTDDYGIQNVAKKLNIEVRGIAFEPTNKDFIWRKICEGCKKLYPVDYEEDICEICGSPLKRKMVKSRLKKKRKKK</sequence>
<gene>
    <name type="primary">nob1</name>
    <name type="synonym">vapC5</name>
    <name type="ordered locus">MJ1474</name>
</gene>
<comment type="function">
    <text evidence="1">Toxic component of a type II toxin-antitoxin (TA) system. Processes pre-16S-rRNA at its 3' end (the D-site) to yield the mature 3' end (By similarity).</text>
</comment>
<comment type="cofactor">
    <cofactor evidence="4">
        <name>Mn(2+)</name>
        <dbReference type="ChEBI" id="CHEBI:29035"/>
    </cofactor>
</comment>
<comment type="cofactor">
    <cofactor evidence="1">
        <name>Zn(2+)</name>
        <dbReference type="ChEBI" id="CHEBI:29105"/>
    </cofactor>
    <text evidence="1">Binds 1 zinc ion per subunit.</text>
</comment>
<comment type="domain">
    <text evidence="1">Has 2 structurally independent domains; the N-terminal PINc domain which binds Mn(2+), rRNA substrate and probably has endoribonuclease activity, and the C-terminal zinc ribbon domain which also binds rRNA substrate.</text>
</comment>
<comment type="similarity">
    <text evidence="3">Belongs to the PINc/VapC protein family.</text>
</comment>